<name>NOS2_BOVIN</name>
<protein>
    <recommendedName>
        <fullName>Nitric oxide synthase, inducible</fullName>
        <ecNumber evidence="5">1.14.13.39</ecNumber>
    </recommendedName>
    <alternativeName>
        <fullName>Inducible NO synthase</fullName>
        <shortName>Inducible NOS</shortName>
        <shortName>iNOS</shortName>
    </alternativeName>
    <alternativeName>
        <fullName>NOS type II</fullName>
        <shortName>NOSII</shortName>
    </alternativeName>
    <alternativeName>
        <fullName>Peptidyl-cysteine S-nitrosylase NOS2</fullName>
    </alternativeName>
</protein>
<comment type="function">
    <text evidence="5 6">Produces nitric oxide (NO) which is a messenger molecule with diverse functions throughout the body. In macrophages, NO mediates tumoricidal and bactericidal actions. Also has nitrosylase activity and mediates cysteine S-nitrosylation of cytoplasmic target proteins such PTGS2/COX2. As component of the iNOS-S100A8/9 transnitrosylase complex involved in the selective inflammatory stimulus-dependent S-nitrosylation of GAPDH implicated in regulation of the GAIT complex activity and probably multiple targets including ANXA5, EZR, MSN and VIM. Involved in inflammation, enhances the synthesis of pro-inflammatory mediators such as IL6 and IL8.</text>
</comment>
<comment type="catalytic activity">
    <reaction evidence="5">
        <text>2 L-arginine + 3 NADPH + 4 O2 + H(+) = 2 L-citrulline + 2 nitric oxide + 3 NADP(+) + 4 H2O</text>
        <dbReference type="Rhea" id="RHEA:19897"/>
        <dbReference type="ChEBI" id="CHEBI:15377"/>
        <dbReference type="ChEBI" id="CHEBI:15378"/>
        <dbReference type="ChEBI" id="CHEBI:15379"/>
        <dbReference type="ChEBI" id="CHEBI:16480"/>
        <dbReference type="ChEBI" id="CHEBI:32682"/>
        <dbReference type="ChEBI" id="CHEBI:57743"/>
        <dbReference type="ChEBI" id="CHEBI:57783"/>
        <dbReference type="ChEBI" id="CHEBI:58349"/>
        <dbReference type="EC" id="1.14.13.39"/>
    </reaction>
    <physiologicalReaction direction="left-to-right" evidence="5">
        <dbReference type="Rhea" id="RHEA:19898"/>
    </physiologicalReaction>
</comment>
<comment type="cofactor">
    <cofactor evidence="5">
        <name>heme b</name>
        <dbReference type="ChEBI" id="CHEBI:60344"/>
    </cofactor>
</comment>
<comment type="cofactor">
    <cofactor evidence="3">
        <name>FAD</name>
        <dbReference type="ChEBI" id="CHEBI:57692"/>
    </cofactor>
    <text evidence="3">Binds 1 FAD.</text>
</comment>
<comment type="cofactor">
    <cofactor evidence="5">
        <name>FMN</name>
        <dbReference type="ChEBI" id="CHEBI:58210"/>
    </cofactor>
    <text evidence="5">Binds 1 FMN.</text>
</comment>
<comment type="cofactor">
    <cofactor evidence="5">
        <name>(6R)-L-erythro-5,6,7,8-tetrahydrobiopterin</name>
        <dbReference type="ChEBI" id="CHEBI:59560"/>
    </cofactor>
    <text evidence="5">Tetrahydrobiopterin (BH4). May stabilize the dimeric form of the enzyme.</text>
</comment>
<comment type="activity regulation">
    <text evidence="1">Regulated by calcium/calmodulin.</text>
</comment>
<comment type="subunit">
    <text evidence="4">Homodimer. Interacts with NHERF1. Interacts with GAPDH; induced by oxidatively-modified low-densitity lipoprotein (LDL(ox)). Interacts with S100A8 and S100A9 to form the iNOS-S100A8/9 transnitrosylase complex. Interacts with SPSB1, SPSB2 and SPSB4. Interacts with ELOC and CUL5 in the presence of SPSB1 or SPSB2 or SPSB4. Forms a complex with ASL, ASS1 and HSP90AA1; the complex regulates cell-autonomous L-arginine synthesis and citrulline recycling while channeling extracellular L-arginine to nitric oxide synthesis pathway.</text>
</comment>
<comment type="subcellular location">
    <subcellularLocation>
        <location evidence="5">Cytoplasm</location>
        <location evidence="5">Cytosol</location>
    </subcellularLocation>
    <text evidence="5">Localizes as discrete foci scattered throughout the cytosol and in the presence of SPSB1 and SPSB4, exhibits a more diffuse cytosolic localization.</text>
</comment>
<comment type="PTM">
    <text evidence="5">Polyubiquitinated; mediated by SPSB1, SPSB2 and SPSB4, leading to proteasomal degradation.</text>
</comment>
<comment type="similarity">
    <text evidence="11">Belongs to the NOS family.</text>
</comment>
<sequence length="1156" mass="131208">MACPWQFLFKIKSQKVDLATELDINNNVGKFYQPPSSPVTQDDPKRHSPGKHGNESPQPLTGTVKTSPESLSKLDAPPSACPRHVRIKNWGSGVTFQDTLHQKAKGDLSCKSKSCLASIMNPKSLTIGPRDKPTPPDELLPQAIEFVNQYYGSFKEAKIEEHLARVEAVTKEIETTGTYQLTGDELIFATKQAWRNAPRCIGRIQWSNLQVFDARSCSTAQEMFEHICRHVRYATNNGNIRSAITVFPQRSDGKHDFRVWNAQLIRYAGYQMPDGSIRGDPANVEFTQLCIDLGWKPKYGRFDVLPLVLQADGRDPELFEIPPDLVLEVPMEHPRYEWFRELELKWYALPAVANMLLEVGGLEFPGCPFNGWYMGTEVGVRDFCDAQRYNILEEVGRRMGLETHKVASLWKDRAVVEINVAVLHSFQKQNVTIMDHHSAAESFMKYMQNEYRSRGGCPADWIWLVPPISGSITPVFHQEMLNYVLSPFYYYQVEPWKTHVWQDERRRPQRREIRFKVLVKAVFFASVLMHKAMASRVRATILFATETGRSETLAQDLGALFSCAFNPKVLCMDQYQLSHLEEEQLLLVVTSTFGNGDSPGNGEKLKKSLLMLKELTNTFRYAVFGLGSSMYPQFCAFAHDIDQKLSQLGASQLAPTGEGDELSGQEEAFRSWAVQTFKAACETFDVSGKHHIEIPKLYTSNVTWDPQHYRLVQDSEPLDLNKALSSMHAKHVFTMRLKSQQNLQSPKSSRTTLLVELSCEGSQAPSYLPGEHLGVFPCNQPALVQGILERVVDGPAPHQPVRLETLCENGSYWVKDKRLPPCSLSQALTYFLDITTPPTQLLLRKLAQLATEEAEKQRLETLCQPSDYNKWKFTNSPTFLEVLEEFPSLRVSASFLLSQLPILKPRYYSISSSRDLTPTEIHLTVAVLTYRTRDGQGPLHHGVCSTWLSSLKPQDPVPCFVRSASGFQLPEDRSRPCILIGPGTGIAPFRSFWQQRLHEAEHKGLQGGRMTLVFGCRRPEEDHLYWEEMLEMARKGVLHEVHTAYSRLPDQPKVYVQDILRQRLAGEVLRVLHEEQGHLYVCGDVRMARDVARTLKQLMATALSLNEEQVEDYFFQLKNQKRYHEDIFGAVFPYEVKKDGAAGLPSNPRAPGAHRS</sequence>
<accession>Q27995</accession>
<accession>Q06Q84</accession>
<accession>Q27985</accession>
<dbReference type="EC" id="1.14.13.39" evidence="5"/>
<dbReference type="EMBL" id="DQ676956">
    <property type="protein sequence ID" value="ABG74910.1"/>
    <property type="molecule type" value="mRNA"/>
</dbReference>
<dbReference type="EMBL" id="U14640">
    <property type="protein sequence ID" value="AAC48470.2"/>
    <property type="molecule type" value="mRNA"/>
</dbReference>
<dbReference type="EMBL" id="U18331">
    <property type="protein sequence ID" value="AAC48479.1"/>
    <property type="molecule type" value="mRNA"/>
</dbReference>
<dbReference type="PIR" id="I46074">
    <property type="entry name" value="I46074"/>
</dbReference>
<dbReference type="RefSeq" id="NP_001070267.1">
    <property type="nucleotide sequence ID" value="NM_001076799.1"/>
</dbReference>
<dbReference type="SMR" id="Q27995"/>
<dbReference type="FunCoup" id="Q27995">
    <property type="interactions" value="201"/>
</dbReference>
<dbReference type="STRING" id="9913.ENSBTAP00000009062"/>
<dbReference type="PaxDb" id="9913-ENSBTAP00000009062"/>
<dbReference type="GeneID" id="282876"/>
<dbReference type="KEGG" id="bta:282876"/>
<dbReference type="CTD" id="4843"/>
<dbReference type="eggNOG" id="KOG1158">
    <property type="taxonomic scope" value="Eukaryota"/>
</dbReference>
<dbReference type="InParanoid" id="Q27995"/>
<dbReference type="OrthoDB" id="1688044at2759"/>
<dbReference type="Proteomes" id="UP000009136">
    <property type="component" value="Unplaced"/>
</dbReference>
<dbReference type="GO" id="GO:0005829">
    <property type="term" value="C:cytosol"/>
    <property type="evidence" value="ECO:0000318"/>
    <property type="project" value="GO_Central"/>
</dbReference>
<dbReference type="GO" id="GO:0005634">
    <property type="term" value="C:nucleus"/>
    <property type="evidence" value="ECO:0000318"/>
    <property type="project" value="GO_Central"/>
</dbReference>
<dbReference type="GO" id="GO:0005886">
    <property type="term" value="C:plasma membrane"/>
    <property type="evidence" value="ECO:0000318"/>
    <property type="project" value="GO_Central"/>
</dbReference>
<dbReference type="GO" id="GO:0005516">
    <property type="term" value="F:calmodulin binding"/>
    <property type="evidence" value="ECO:0007669"/>
    <property type="project" value="UniProtKB-KW"/>
</dbReference>
<dbReference type="GO" id="GO:0050660">
    <property type="term" value="F:flavin adenine dinucleotide binding"/>
    <property type="evidence" value="ECO:0000318"/>
    <property type="project" value="GO_Central"/>
</dbReference>
<dbReference type="GO" id="GO:0010181">
    <property type="term" value="F:FMN binding"/>
    <property type="evidence" value="ECO:0000318"/>
    <property type="project" value="GO_Central"/>
</dbReference>
<dbReference type="GO" id="GO:0020037">
    <property type="term" value="F:heme binding"/>
    <property type="evidence" value="ECO:0007669"/>
    <property type="project" value="InterPro"/>
</dbReference>
<dbReference type="GO" id="GO:0046872">
    <property type="term" value="F:metal ion binding"/>
    <property type="evidence" value="ECO:0007669"/>
    <property type="project" value="UniProtKB-KW"/>
</dbReference>
<dbReference type="GO" id="GO:0050661">
    <property type="term" value="F:NADP binding"/>
    <property type="evidence" value="ECO:0007669"/>
    <property type="project" value="InterPro"/>
</dbReference>
<dbReference type="GO" id="GO:0004517">
    <property type="term" value="F:nitric-oxide synthase activity"/>
    <property type="evidence" value="ECO:0000250"/>
    <property type="project" value="UniProtKB"/>
</dbReference>
<dbReference type="GO" id="GO:0006527">
    <property type="term" value="P:arginine catabolic process"/>
    <property type="evidence" value="ECO:0000318"/>
    <property type="project" value="GO_Central"/>
</dbReference>
<dbReference type="GO" id="GO:0042742">
    <property type="term" value="P:defense response to bacterium"/>
    <property type="evidence" value="ECO:0000318"/>
    <property type="project" value="GO_Central"/>
</dbReference>
<dbReference type="GO" id="GO:0006954">
    <property type="term" value="P:inflammatory response"/>
    <property type="evidence" value="ECO:0000318"/>
    <property type="project" value="GO_Central"/>
</dbReference>
<dbReference type="GO" id="GO:0045776">
    <property type="term" value="P:negative regulation of blood pressure"/>
    <property type="evidence" value="ECO:0000318"/>
    <property type="project" value="GO_Central"/>
</dbReference>
<dbReference type="GO" id="GO:0006809">
    <property type="term" value="P:nitric oxide biosynthetic process"/>
    <property type="evidence" value="ECO:0000318"/>
    <property type="project" value="GO_Central"/>
</dbReference>
<dbReference type="GO" id="GO:0007263">
    <property type="term" value="P:nitric oxide mediated signal transduction"/>
    <property type="evidence" value="ECO:0000318"/>
    <property type="project" value="GO_Central"/>
</dbReference>
<dbReference type="GO" id="GO:0018119">
    <property type="term" value="P:peptidyl-cysteine S-nitrosylation"/>
    <property type="evidence" value="ECO:0000250"/>
    <property type="project" value="UniProtKB"/>
</dbReference>
<dbReference type="GO" id="GO:0032755">
    <property type="term" value="P:positive regulation of interleukin-6 production"/>
    <property type="evidence" value="ECO:0000250"/>
    <property type="project" value="UniProtKB"/>
</dbReference>
<dbReference type="GO" id="GO:0032757">
    <property type="term" value="P:positive regulation of interleukin-8 production"/>
    <property type="evidence" value="ECO:0000250"/>
    <property type="project" value="UniProtKB"/>
</dbReference>
<dbReference type="GO" id="GO:0032310">
    <property type="term" value="P:prostaglandin secretion"/>
    <property type="evidence" value="ECO:0000250"/>
    <property type="project" value="UniProtKB"/>
</dbReference>
<dbReference type="GO" id="GO:1900015">
    <property type="term" value="P:regulation of cytokine production involved in inflammatory response"/>
    <property type="evidence" value="ECO:0000250"/>
    <property type="project" value="UniProtKB"/>
</dbReference>
<dbReference type="GO" id="GO:0009725">
    <property type="term" value="P:response to hormone"/>
    <property type="evidence" value="ECO:0000318"/>
    <property type="project" value="GO_Central"/>
</dbReference>
<dbReference type="GO" id="GO:0032496">
    <property type="term" value="P:response to lipopolysaccharide"/>
    <property type="evidence" value="ECO:0000318"/>
    <property type="project" value="GO_Central"/>
</dbReference>
<dbReference type="CDD" id="cd00795">
    <property type="entry name" value="NOS_oxygenase_euk"/>
    <property type="match status" value="1"/>
</dbReference>
<dbReference type="FunFam" id="1.20.990.10:FF:000006">
    <property type="entry name" value="Nitric oxide synthase"/>
    <property type="match status" value="1"/>
</dbReference>
<dbReference type="FunFam" id="3.40.50.360:FF:000039">
    <property type="entry name" value="Nitric oxide synthase"/>
    <property type="match status" value="1"/>
</dbReference>
<dbReference type="FunFam" id="3.40.50.80:FF:000003">
    <property type="entry name" value="Nitric oxide synthase"/>
    <property type="match status" value="1"/>
</dbReference>
<dbReference type="FunFam" id="3.90.1230.10:FF:000001">
    <property type="entry name" value="Nitric oxide synthase, brain"/>
    <property type="match status" value="1"/>
</dbReference>
<dbReference type="FunFam" id="3.90.440.10:FF:000005">
    <property type="entry name" value="Nitric oxide synthase, inducible"/>
    <property type="match status" value="1"/>
</dbReference>
<dbReference type="Gene3D" id="3.40.50.360">
    <property type="match status" value="2"/>
</dbReference>
<dbReference type="Gene3D" id="6.10.250.410">
    <property type="match status" value="1"/>
</dbReference>
<dbReference type="Gene3D" id="1.20.990.10">
    <property type="entry name" value="NADPH-cytochrome p450 Reductase, Chain A, domain 3"/>
    <property type="match status" value="1"/>
</dbReference>
<dbReference type="Gene3D" id="3.90.340.10">
    <property type="entry name" value="Nitric Oxide Synthase, Chain A, domain 1"/>
    <property type="match status" value="1"/>
</dbReference>
<dbReference type="Gene3D" id="3.90.1230.10">
    <property type="entry name" value="Nitric Oxide Synthase, Chain A, domain 3"/>
    <property type="match status" value="1"/>
</dbReference>
<dbReference type="Gene3D" id="3.90.440.10">
    <property type="entry name" value="Nitric Oxide Synthase,Heme Domain,Chain A domain 2"/>
    <property type="match status" value="1"/>
</dbReference>
<dbReference type="Gene3D" id="3.40.50.80">
    <property type="entry name" value="Nucleotide-binding domain of ferredoxin-NADP reductase (FNR) module"/>
    <property type="match status" value="1"/>
</dbReference>
<dbReference type="Gene3D" id="2.40.30.10">
    <property type="entry name" value="Translation factors"/>
    <property type="match status" value="1"/>
</dbReference>
<dbReference type="InterPro" id="IPR003097">
    <property type="entry name" value="CysJ-like_FAD-binding"/>
</dbReference>
<dbReference type="InterPro" id="IPR017927">
    <property type="entry name" value="FAD-bd_FR_type"/>
</dbReference>
<dbReference type="InterPro" id="IPR001094">
    <property type="entry name" value="Flavdoxin-like"/>
</dbReference>
<dbReference type="InterPro" id="IPR008254">
    <property type="entry name" value="Flavodoxin/NO_synth"/>
</dbReference>
<dbReference type="InterPro" id="IPR001709">
    <property type="entry name" value="Flavoprot_Pyr_Nucl_cyt_Rdtase"/>
</dbReference>
<dbReference type="InterPro" id="IPR029039">
    <property type="entry name" value="Flavoprotein-like_sf"/>
</dbReference>
<dbReference type="InterPro" id="IPR039261">
    <property type="entry name" value="FNR_nucleotide-bd"/>
</dbReference>
<dbReference type="InterPro" id="IPR023173">
    <property type="entry name" value="NADPH_Cyt_P450_Rdtase_alpha"/>
</dbReference>
<dbReference type="InterPro" id="IPR050607">
    <property type="entry name" value="NOS"/>
</dbReference>
<dbReference type="InterPro" id="IPR044943">
    <property type="entry name" value="NOS_dom_1"/>
</dbReference>
<dbReference type="InterPro" id="IPR044940">
    <property type="entry name" value="NOS_dom_2"/>
</dbReference>
<dbReference type="InterPro" id="IPR044944">
    <property type="entry name" value="NOS_dom_3"/>
</dbReference>
<dbReference type="InterPro" id="IPR012144">
    <property type="entry name" value="NOS_euk"/>
</dbReference>
<dbReference type="InterPro" id="IPR004030">
    <property type="entry name" value="NOS_N"/>
</dbReference>
<dbReference type="InterPro" id="IPR036119">
    <property type="entry name" value="NOS_N_sf"/>
</dbReference>
<dbReference type="InterPro" id="IPR001433">
    <property type="entry name" value="OxRdtase_FAD/NAD-bd"/>
</dbReference>
<dbReference type="InterPro" id="IPR017938">
    <property type="entry name" value="Riboflavin_synthase-like_b-brl"/>
</dbReference>
<dbReference type="PANTHER" id="PTHR43410:SF4">
    <property type="entry name" value="NITRIC OXIDE SYNTHASE"/>
    <property type="match status" value="1"/>
</dbReference>
<dbReference type="PANTHER" id="PTHR43410">
    <property type="entry name" value="NITRIC OXIDE SYNTHASE OXYGENASE"/>
    <property type="match status" value="1"/>
</dbReference>
<dbReference type="Pfam" id="PF00667">
    <property type="entry name" value="FAD_binding_1"/>
    <property type="match status" value="1"/>
</dbReference>
<dbReference type="Pfam" id="PF00258">
    <property type="entry name" value="Flavodoxin_1"/>
    <property type="match status" value="1"/>
</dbReference>
<dbReference type="Pfam" id="PF00175">
    <property type="entry name" value="NAD_binding_1"/>
    <property type="match status" value="1"/>
</dbReference>
<dbReference type="Pfam" id="PF02898">
    <property type="entry name" value="NO_synthase"/>
    <property type="match status" value="1"/>
</dbReference>
<dbReference type="PIRSF" id="PIRSF000333">
    <property type="entry name" value="NOS"/>
    <property type="match status" value="1"/>
</dbReference>
<dbReference type="PRINTS" id="PR00369">
    <property type="entry name" value="FLAVODOXIN"/>
</dbReference>
<dbReference type="PRINTS" id="PR00371">
    <property type="entry name" value="FPNCR"/>
</dbReference>
<dbReference type="SUPFAM" id="SSF52343">
    <property type="entry name" value="Ferredoxin reductase-like, C-terminal NADP-linked domain"/>
    <property type="match status" value="1"/>
</dbReference>
<dbReference type="SUPFAM" id="SSF52218">
    <property type="entry name" value="Flavoproteins"/>
    <property type="match status" value="1"/>
</dbReference>
<dbReference type="SUPFAM" id="SSF56512">
    <property type="entry name" value="Nitric oxide (NO) synthase oxygenase domain"/>
    <property type="match status" value="1"/>
</dbReference>
<dbReference type="SUPFAM" id="SSF63380">
    <property type="entry name" value="Riboflavin synthase domain-like"/>
    <property type="match status" value="1"/>
</dbReference>
<dbReference type="PROSITE" id="PS51384">
    <property type="entry name" value="FAD_FR"/>
    <property type="match status" value="1"/>
</dbReference>
<dbReference type="PROSITE" id="PS50902">
    <property type="entry name" value="FLAVODOXIN_LIKE"/>
    <property type="match status" value="1"/>
</dbReference>
<dbReference type="PROSITE" id="PS60001">
    <property type="entry name" value="NOS"/>
    <property type="match status" value="1"/>
</dbReference>
<organism>
    <name type="scientific">Bos taurus</name>
    <name type="common">Bovine</name>
    <dbReference type="NCBI Taxonomy" id="9913"/>
    <lineage>
        <taxon>Eukaryota</taxon>
        <taxon>Metazoa</taxon>
        <taxon>Chordata</taxon>
        <taxon>Craniata</taxon>
        <taxon>Vertebrata</taxon>
        <taxon>Euteleostomi</taxon>
        <taxon>Mammalia</taxon>
        <taxon>Eutheria</taxon>
        <taxon>Laurasiatheria</taxon>
        <taxon>Artiodactyla</taxon>
        <taxon>Ruminantia</taxon>
        <taxon>Pecora</taxon>
        <taxon>Bovidae</taxon>
        <taxon>Bovinae</taxon>
        <taxon>Bos</taxon>
    </lineage>
</organism>
<reference key="1">
    <citation type="submission" date="2006-06" db="EMBL/GenBank/DDBJ databases">
        <title>Cloning and characterization of bovine inducible nitric oxide synthase.</title>
        <authorList>
            <person name="Widdison S."/>
            <person name="Ashley G.R."/>
            <person name="Howard C.J."/>
            <person name="Coffey T.J."/>
        </authorList>
    </citation>
    <scope>NUCLEOTIDE SEQUENCE [MRNA]</scope>
</reference>
<reference key="2">
    <citation type="journal article" date="1995" name="J. Immunol.">
        <title>Inducible nitric oxide synthase in cattle. Differential cytokine regulation of nitric oxide synthase in bovine and murine macrophages.</title>
        <authorList>
            <person name="Adler H."/>
            <person name="Frech B."/>
            <person name="Thoeny M."/>
            <person name="Pfister H."/>
            <person name="Peterhans E."/>
            <person name="Jungi T.W."/>
        </authorList>
    </citation>
    <scope>NUCLEOTIDE SEQUENCE [MRNA] OF 166-275</scope>
    <source>
        <tissue>Bone marrow macrophage</tissue>
    </source>
</reference>
<reference key="3">
    <citation type="journal article" date="1995" name="Genomics">
        <title>Three members of the nitric oxide synthase II gene family (NOS2A, NOS2B, and NOS2C) colocalize to human chromosome 17.</title>
        <authorList>
            <person name="Bloch K.D."/>
            <person name="Wolfram J.R."/>
            <person name="Brown D.M."/>
            <person name="Roberts J.D. Jr."/>
            <person name="Zapol D.G."/>
            <person name="Lepore J.J."/>
            <person name="Filippov G."/>
            <person name="Thomas J.E."/>
            <person name="Jacob H.J."/>
            <person name="Bloch D.B."/>
        </authorList>
    </citation>
    <scope>NUCLEOTIDE SEQUENCE [MRNA] OF 987-1122</scope>
    <source>
        <tissue>Pulmonary artery</tissue>
    </source>
</reference>
<gene>
    <name type="primary">NOS2</name>
</gene>
<evidence type="ECO:0000250" key="1"/>
<evidence type="ECO:0000250" key="2">
    <source>
        <dbReference type="UniProtKB" id="P29474"/>
    </source>
</evidence>
<evidence type="ECO:0000250" key="3">
    <source>
        <dbReference type="UniProtKB" id="P29476"/>
    </source>
</evidence>
<evidence type="ECO:0000250" key="4">
    <source>
        <dbReference type="UniProtKB" id="P29477"/>
    </source>
</evidence>
<evidence type="ECO:0000250" key="5">
    <source>
        <dbReference type="UniProtKB" id="P35228"/>
    </source>
</evidence>
<evidence type="ECO:0000250" key="6">
    <source>
        <dbReference type="UniProtKB" id="P79290"/>
    </source>
</evidence>
<evidence type="ECO:0000250" key="7">
    <source>
        <dbReference type="UniProtKB" id="Q06518"/>
    </source>
</evidence>
<evidence type="ECO:0000255" key="8">
    <source>
        <dbReference type="PROSITE-ProRule" id="PRU00088"/>
    </source>
</evidence>
<evidence type="ECO:0000255" key="9">
    <source>
        <dbReference type="PROSITE-ProRule" id="PRU00716"/>
    </source>
</evidence>
<evidence type="ECO:0000256" key="10">
    <source>
        <dbReference type="SAM" id="MobiDB-lite"/>
    </source>
</evidence>
<evidence type="ECO:0000305" key="11"/>
<feature type="chain" id="PRO_0000170926" description="Nitric oxide synthase, inducible">
    <location>
        <begin position="1"/>
        <end position="1156"/>
    </location>
</feature>
<feature type="domain" description="Flavodoxin-like" evidence="8">
    <location>
        <begin position="539"/>
        <end position="677"/>
    </location>
</feature>
<feature type="domain" description="FAD-binding FR-type" evidence="9">
    <location>
        <begin position="730"/>
        <end position="970"/>
    </location>
</feature>
<feature type="region of interest" description="Disordered" evidence="10">
    <location>
        <begin position="27"/>
        <end position="84"/>
    </location>
</feature>
<feature type="region of interest" description="Calmodulin-binding" evidence="5">
    <location>
        <begin position="515"/>
        <end position="535"/>
    </location>
</feature>
<feature type="short sequence motif" description="DINNN-motif; mediates interaction with SPSB1, SPSB2 and SPSB4" evidence="5">
    <location>
        <begin position="23"/>
        <end position="27"/>
    </location>
</feature>
<feature type="compositionally biased region" description="Polar residues" evidence="10">
    <location>
        <begin position="55"/>
        <end position="70"/>
    </location>
</feature>
<feature type="binding site" evidence="5">
    <location>
        <position position="110"/>
    </location>
    <ligand>
        <name>Zn(2+)</name>
        <dbReference type="ChEBI" id="CHEBI:29105"/>
        <note>ligand shared between homodimeric partners</note>
    </ligand>
</feature>
<feature type="binding site" evidence="5">
    <location>
        <position position="115"/>
    </location>
    <ligand>
        <name>Zn(2+)</name>
        <dbReference type="ChEBI" id="CHEBI:29105"/>
        <note>ligand shared between homodimeric partners</note>
    </ligand>
</feature>
<feature type="binding site" evidence="2">
    <location>
        <position position="118"/>
    </location>
    <ligand>
        <name>(6R)-L-erythro-5,6,7,8-tetrahydrobiopterin</name>
        <dbReference type="ChEBI" id="CHEBI:59560"/>
    </ligand>
</feature>
<feature type="binding site" description="axial binding residue" evidence="2">
    <location>
        <position position="200"/>
    </location>
    <ligand>
        <name>heme b</name>
        <dbReference type="ChEBI" id="CHEBI:60344"/>
    </ligand>
    <ligandPart>
        <name>Fe</name>
        <dbReference type="ChEBI" id="CHEBI:18248"/>
    </ligandPart>
</feature>
<feature type="binding site" evidence="2">
    <location>
        <position position="263"/>
    </location>
    <ligand>
        <name>L-arginine</name>
        <dbReference type="ChEBI" id="CHEBI:32682"/>
    </ligand>
</feature>
<feature type="binding site" evidence="2">
    <location>
        <position position="372"/>
    </location>
    <ligand>
        <name>L-arginine</name>
        <dbReference type="ChEBI" id="CHEBI:32682"/>
    </ligand>
</feature>
<feature type="binding site" evidence="2">
    <location>
        <position position="373"/>
    </location>
    <ligand>
        <name>L-arginine</name>
        <dbReference type="ChEBI" id="CHEBI:32682"/>
    </ligand>
</feature>
<feature type="binding site" evidence="2">
    <location>
        <position position="377"/>
    </location>
    <ligand>
        <name>L-arginine</name>
        <dbReference type="ChEBI" id="CHEBI:32682"/>
    </ligand>
</feature>
<feature type="binding site" evidence="5">
    <location>
        <position position="381"/>
    </location>
    <ligand>
        <name>(6R)-L-erythro-5,6,7,8-tetrahydrobiopterin</name>
        <dbReference type="ChEBI" id="CHEBI:59560"/>
    </ligand>
</feature>
<feature type="binding site" evidence="5">
    <location>
        <position position="462"/>
    </location>
    <ligand>
        <name>(6R)-L-erythro-5,6,7,8-tetrahydrobiopterin</name>
        <dbReference type="ChEBI" id="CHEBI:59560"/>
    </ligand>
</feature>
<feature type="binding site" evidence="2">
    <location>
        <position position="463"/>
    </location>
    <ligand>
        <name>(6R)-L-erythro-5,6,7,8-tetrahydrobiopterin</name>
        <dbReference type="ChEBI" id="CHEBI:59560"/>
    </ligand>
</feature>
<feature type="binding site" evidence="2">
    <location>
        <position position="476"/>
    </location>
    <ligand>
        <name>(6R)-L-erythro-5,6,7,8-tetrahydrobiopterin</name>
        <dbReference type="ChEBI" id="CHEBI:59560"/>
    </ligand>
</feature>
<feature type="binding site" evidence="2">
    <location>
        <position position="491"/>
    </location>
    <ligand>
        <name>heme b</name>
        <dbReference type="ChEBI" id="CHEBI:60344"/>
    </ligand>
</feature>
<feature type="binding site" evidence="5">
    <location>
        <position position="545"/>
    </location>
    <ligand>
        <name>FMN</name>
        <dbReference type="ChEBI" id="CHEBI:58210"/>
    </ligand>
</feature>
<feature type="binding site" evidence="5">
    <location>
        <position position="546"/>
    </location>
    <ligand>
        <name>FMN</name>
        <dbReference type="ChEBI" id="CHEBI:58210"/>
    </ligand>
</feature>
<feature type="binding site" evidence="5">
    <location>
        <position position="547"/>
    </location>
    <ligand>
        <name>FMN</name>
        <dbReference type="ChEBI" id="CHEBI:58210"/>
    </ligand>
</feature>
<feature type="binding site" evidence="5">
    <location>
        <position position="549"/>
    </location>
    <ligand>
        <name>FMN</name>
        <dbReference type="ChEBI" id="CHEBI:58210"/>
    </ligand>
</feature>
<feature type="binding site" evidence="5">
    <location>
        <position position="550"/>
    </location>
    <ligand>
        <name>FMN</name>
        <dbReference type="ChEBI" id="CHEBI:58210"/>
    </ligand>
</feature>
<feature type="binding site" evidence="5">
    <location>
        <position position="591"/>
    </location>
    <ligand>
        <name>FMN</name>
        <dbReference type="ChEBI" id="CHEBI:58210"/>
    </ligand>
</feature>
<feature type="binding site" evidence="5">
    <location>
        <position position="592"/>
    </location>
    <ligand>
        <name>FMN</name>
        <dbReference type="ChEBI" id="CHEBI:58210"/>
    </ligand>
</feature>
<feature type="binding site" evidence="5">
    <location>
        <position position="628"/>
    </location>
    <ligand>
        <name>FMN</name>
        <dbReference type="ChEBI" id="CHEBI:58210"/>
    </ligand>
</feature>
<feature type="binding site" evidence="5">
    <location>
        <position position="635"/>
    </location>
    <ligand>
        <name>FMN</name>
        <dbReference type="ChEBI" id="CHEBI:58210"/>
    </ligand>
</feature>
<feature type="binding site" evidence="5">
    <location>
        <position position="661"/>
    </location>
    <ligand>
        <name>FMN</name>
        <dbReference type="ChEBI" id="CHEBI:58210"/>
    </ligand>
</feature>
<feature type="binding site" evidence="5">
    <location>
        <position position="665"/>
    </location>
    <ligand>
        <name>FMN</name>
        <dbReference type="ChEBI" id="CHEBI:58210"/>
    </ligand>
</feature>
<feature type="binding site" evidence="3">
    <location>
        <position position="750"/>
    </location>
    <ligand>
        <name>NADP(+)</name>
        <dbReference type="ChEBI" id="CHEBI:58349"/>
    </ligand>
</feature>
<feature type="binding site" evidence="3">
    <location>
        <position position="772"/>
    </location>
    <ligand>
        <name>FAD</name>
        <dbReference type="ChEBI" id="CHEBI:57692"/>
    </ligand>
</feature>
<feature type="binding site" evidence="3">
    <location>
        <position position="906"/>
    </location>
    <ligand>
        <name>FAD</name>
        <dbReference type="ChEBI" id="CHEBI:57692"/>
    </ligand>
</feature>
<feature type="binding site" evidence="3">
    <location>
        <position position="908"/>
    </location>
    <ligand>
        <name>FAD</name>
        <dbReference type="ChEBI" id="CHEBI:57692"/>
    </ligand>
</feature>
<feature type="binding site" evidence="3">
    <location>
        <position position="909"/>
    </location>
    <ligand>
        <name>FAD</name>
        <dbReference type="ChEBI" id="CHEBI:57692"/>
    </ligand>
</feature>
<feature type="binding site" evidence="3">
    <location>
        <position position="924"/>
    </location>
    <ligand>
        <name>FAD</name>
        <dbReference type="ChEBI" id="CHEBI:57692"/>
    </ligand>
</feature>
<feature type="binding site" evidence="3">
    <location>
        <position position="926"/>
    </location>
    <ligand>
        <name>FAD</name>
        <dbReference type="ChEBI" id="CHEBI:57692"/>
    </ligand>
</feature>
<feature type="binding site" evidence="3">
    <location>
        <position position="929"/>
    </location>
    <ligand>
        <name>NADP(+)</name>
        <dbReference type="ChEBI" id="CHEBI:58349"/>
    </ligand>
</feature>
<feature type="binding site" evidence="3">
    <location>
        <position position="930"/>
    </location>
    <ligand>
        <name>FAD</name>
        <dbReference type="ChEBI" id="CHEBI:57692"/>
    </ligand>
</feature>
<feature type="binding site" evidence="3">
    <location>
        <position position="943"/>
    </location>
    <ligand>
        <name>FAD</name>
        <dbReference type="ChEBI" id="CHEBI:57692"/>
    </ligand>
</feature>
<feature type="binding site" evidence="3">
    <location>
        <position position="944"/>
    </location>
    <ligand>
        <name>FAD</name>
        <dbReference type="ChEBI" id="CHEBI:57692"/>
    </ligand>
</feature>
<feature type="binding site" evidence="3">
    <location>
        <position position="945"/>
    </location>
    <ligand>
        <name>FAD</name>
        <dbReference type="ChEBI" id="CHEBI:57692"/>
    </ligand>
</feature>
<feature type="binding site" evidence="3">
    <location>
        <position position="984"/>
    </location>
    <ligand>
        <name>NADP(+)</name>
        <dbReference type="ChEBI" id="CHEBI:58349"/>
    </ligand>
</feature>
<feature type="binding site" evidence="3">
    <location>
        <position position="1017"/>
    </location>
    <ligand>
        <name>NADP(+)</name>
        <dbReference type="ChEBI" id="CHEBI:58349"/>
    </ligand>
</feature>
<feature type="binding site" evidence="3">
    <location>
        <position position="1046"/>
    </location>
    <ligand>
        <name>NADP(+)</name>
        <dbReference type="ChEBI" id="CHEBI:58349"/>
    </ligand>
</feature>
<feature type="binding site" evidence="3">
    <location>
        <position position="1047"/>
    </location>
    <ligand>
        <name>NADP(+)</name>
        <dbReference type="ChEBI" id="CHEBI:58349"/>
    </ligand>
</feature>
<feature type="binding site" evidence="3">
    <location>
        <position position="1053"/>
    </location>
    <ligand>
        <name>NADP(+)</name>
        <dbReference type="ChEBI" id="CHEBI:58349"/>
    </ligand>
</feature>
<feature type="binding site" evidence="3">
    <location>
        <position position="1055"/>
    </location>
    <ligand>
        <name>NADP(+)</name>
        <dbReference type="ChEBI" id="CHEBI:58349"/>
    </ligand>
</feature>
<feature type="binding site" evidence="3">
    <location>
        <position position="1057"/>
    </location>
    <ligand>
        <name>NADP(+)</name>
        <dbReference type="ChEBI" id="CHEBI:58349"/>
    </ligand>
</feature>
<feature type="binding site" evidence="3">
    <location>
        <position position="1090"/>
    </location>
    <ligand>
        <name>NADP(+)</name>
        <dbReference type="ChEBI" id="CHEBI:58349"/>
    </ligand>
</feature>
<feature type="modified residue" description="Phosphotyrosine" evidence="7">
    <location>
        <position position="575"/>
    </location>
</feature>
<feature type="sequence conflict" description="In Ref. 2; AAC48470." evidence="11" ref="2">
    <original>N</original>
    <variation>S</variation>
    <location>
        <position position="236"/>
    </location>
</feature>
<feature type="sequence conflict" description="In Ref. 3; AAC48479." evidence="11" ref="3">
    <original>VL</original>
    <variation>AF</variation>
    <location>
        <begin position="1068"/>
        <end position="1069"/>
    </location>
</feature>
<keyword id="KW-0106">Calcium</keyword>
<keyword id="KW-0112">Calmodulin-binding</keyword>
<keyword id="KW-0963">Cytoplasm</keyword>
<keyword id="KW-0274">FAD</keyword>
<keyword id="KW-0285">Flavoprotein</keyword>
<keyword id="KW-0288">FMN</keyword>
<keyword id="KW-0349">Heme</keyword>
<keyword id="KW-0408">Iron</keyword>
<keyword id="KW-0479">Metal-binding</keyword>
<keyword id="KW-0521">NADP</keyword>
<keyword id="KW-0560">Oxidoreductase</keyword>
<keyword id="KW-0597">Phosphoprotein</keyword>
<keyword id="KW-1185">Reference proteome</keyword>
<keyword id="KW-0832">Ubl conjugation</keyword>
<keyword id="KW-0862">Zinc</keyword>
<proteinExistence type="evidence at transcript level"/>